<dbReference type="EMBL" id="CP000246">
    <property type="protein sequence ID" value="ABG84239.1"/>
    <property type="molecule type" value="Genomic_DNA"/>
</dbReference>
<dbReference type="RefSeq" id="WP_003459781.1">
    <property type="nucleotide sequence ID" value="NC_008261.1"/>
</dbReference>
<dbReference type="SMR" id="Q0TPQ6"/>
<dbReference type="STRING" id="195103.CPF_1951"/>
<dbReference type="PaxDb" id="195103-CPF_1951"/>
<dbReference type="GeneID" id="93001765"/>
<dbReference type="KEGG" id="cpf:CPF_1951"/>
<dbReference type="eggNOG" id="COG0233">
    <property type="taxonomic scope" value="Bacteria"/>
</dbReference>
<dbReference type="HOGENOM" id="CLU_073981_2_0_9"/>
<dbReference type="Proteomes" id="UP000001823">
    <property type="component" value="Chromosome"/>
</dbReference>
<dbReference type="GO" id="GO:0005737">
    <property type="term" value="C:cytoplasm"/>
    <property type="evidence" value="ECO:0007669"/>
    <property type="project" value="UniProtKB-SubCell"/>
</dbReference>
<dbReference type="GO" id="GO:0043023">
    <property type="term" value="F:ribosomal large subunit binding"/>
    <property type="evidence" value="ECO:0007669"/>
    <property type="project" value="TreeGrafter"/>
</dbReference>
<dbReference type="GO" id="GO:0006415">
    <property type="term" value="P:translational termination"/>
    <property type="evidence" value="ECO:0007669"/>
    <property type="project" value="UniProtKB-UniRule"/>
</dbReference>
<dbReference type="CDD" id="cd00520">
    <property type="entry name" value="RRF"/>
    <property type="match status" value="1"/>
</dbReference>
<dbReference type="FunFam" id="1.10.132.20:FF:000001">
    <property type="entry name" value="Ribosome-recycling factor"/>
    <property type="match status" value="1"/>
</dbReference>
<dbReference type="FunFam" id="3.30.1360.40:FF:000001">
    <property type="entry name" value="Ribosome-recycling factor"/>
    <property type="match status" value="1"/>
</dbReference>
<dbReference type="Gene3D" id="3.30.1360.40">
    <property type="match status" value="1"/>
</dbReference>
<dbReference type="Gene3D" id="1.10.132.20">
    <property type="entry name" value="Ribosome-recycling factor"/>
    <property type="match status" value="1"/>
</dbReference>
<dbReference type="HAMAP" id="MF_00040">
    <property type="entry name" value="RRF"/>
    <property type="match status" value="1"/>
</dbReference>
<dbReference type="InterPro" id="IPR002661">
    <property type="entry name" value="Ribosome_recyc_fac"/>
</dbReference>
<dbReference type="InterPro" id="IPR023584">
    <property type="entry name" value="Ribosome_recyc_fac_dom"/>
</dbReference>
<dbReference type="InterPro" id="IPR036191">
    <property type="entry name" value="RRF_sf"/>
</dbReference>
<dbReference type="NCBIfam" id="TIGR00496">
    <property type="entry name" value="frr"/>
    <property type="match status" value="1"/>
</dbReference>
<dbReference type="PANTHER" id="PTHR20982:SF3">
    <property type="entry name" value="MITOCHONDRIAL RIBOSOME RECYCLING FACTOR PSEUDO 1"/>
    <property type="match status" value="1"/>
</dbReference>
<dbReference type="PANTHER" id="PTHR20982">
    <property type="entry name" value="RIBOSOME RECYCLING FACTOR"/>
    <property type="match status" value="1"/>
</dbReference>
<dbReference type="Pfam" id="PF01765">
    <property type="entry name" value="RRF"/>
    <property type="match status" value="1"/>
</dbReference>
<dbReference type="SUPFAM" id="SSF55194">
    <property type="entry name" value="Ribosome recycling factor, RRF"/>
    <property type="match status" value="1"/>
</dbReference>
<proteinExistence type="inferred from homology"/>
<organism>
    <name type="scientific">Clostridium perfringens (strain ATCC 13124 / DSM 756 / JCM 1290 / NCIMB 6125 / NCTC 8237 / Type A)</name>
    <dbReference type="NCBI Taxonomy" id="195103"/>
    <lineage>
        <taxon>Bacteria</taxon>
        <taxon>Bacillati</taxon>
        <taxon>Bacillota</taxon>
        <taxon>Clostridia</taxon>
        <taxon>Eubacteriales</taxon>
        <taxon>Clostridiaceae</taxon>
        <taxon>Clostridium</taxon>
    </lineage>
</organism>
<protein>
    <recommendedName>
        <fullName evidence="1">Ribosome-recycling factor</fullName>
        <shortName evidence="1">RRF</shortName>
    </recommendedName>
    <alternativeName>
        <fullName evidence="1">Ribosome-releasing factor</fullName>
    </alternativeName>
</protein>
<reference key="1">
    <citation type="journal article" date="2006" name="Genome Res.">
        <title>Skewed genomic variability in strains of the toxigenic bacterial pathogen, Clostridium perfringens.</title>
        <authorList>
            <person name="Myers G.S.A."/>
            <person name="Rasko D.A."/>
            <person name="Cheung J.K."/>
            <person name="Ravel J."/>
            <person name="Seshadri R."/>
            <person name="DeBoy R.T."/>
            <person name="Ren Q."/>
            <person name="Varga J."/>
            <person name="Awad M.M."/>
            <person name="Brinkac L.M."/>
            <person name="Daugherty S.C."/>
            <person name="Haft D.H."/>
            <person name="Dodson R.J."/>
            <person name="Madupu R."/>
            <person name="Nelson W.C."/>
            <person name="Rosovitz M.J."/>
            <person name="Sullivan S.A."/>
            <person name="Khouri H."/>
            <person name="Dimitrov G.I."/>
            <person name="Watkins K.L."/>
            <person name="Mulligan S."/>
            <person name="Benton J."/>
            <person name="Radune D."/>
            <person name="Fisher D.J."/>
            <person name="Atkins H.S."/>
            <person name="Hiscox T."/>
            <person name="Jost B.H."/>
            <person name="Billington S.J."/>
            <person name="Songer J.G."/>
            <person name="McClane B.A."/>
            <person name="Titball R.W."/>
            <person name="Rood J.I."/>
            <person name="Melville S.B."/>
            <person name="Paulsen I.T."/>
        </authorList>
    </citation>
    <scope>NUCLEOTIDE SEQUENCE [LARGE SCALE GENOMIC DNA]</scope>
    <source>
        <strain>ATCC 13124 / DSM 756 / JCM 1290 / NCIMB 6125 / NCTC 8237 / S 107 / Type A</strain>
    </source>
</reference>
<evidence type="ECO:0000255" key="1">
    <source>
        <dbReference type="HAMAP-Rule" id="MF_00040"/>
    </source>
</evidence>
<keyword id="KW-0963">Cytoplasm</keyword>
<keyword id="KW-0648">Protein biosynthesis</keyword>
<comment type="function">
    <text evidence="1">Responsible for the release of ribosomes from messenger RNA at the termination of protein biosynthesis. May increase the efficiency of translation by recycling ribosomes from one round of translation to another.</text>
</comment>
<comment type="subcellular location">
    <subcellularLocation>
        <location evidence="1">Cytoplasm</location>
    </subcellularLocation>
</comment>
<comment type="similarity">
    <text evidence="1">Belongs to the RRF family.</text>
</comment>
<accession>Q0TPQ6</accession>
<name>RRF_CLOP1</name>
<sequence length="185" mass="20925">MIKDVIKKSEEKMNKTINSLNSELATMKAGRANPTMLDRIQVEYYGSMCPLNQVANVSSPEPRLLVITPWEKPMLKEIEKAILKSDLGINPNNDGTIIRLLVPELTEETRKNLVKNVKKVGEQAKVAIRSIRKDANDKVKNFKKEGTITEDEMKKGEDDIQKVTDKFVKEIDTIVAAKEKEIMSI</sequence>
<gene>
    <name evidence="1" type="primary">frr</name>
    <name type="ordered locus">CPF_1951</name>
</gene>
<feature type="chain" id="PRO_1000003145" description="Ribosome-recycling factor">
    <location>
        <begin position="1"/>
        <end position="185"/>
    </location>
</feature>